<reference key="1">
    <citation type="submission" date="2006-12" db="EMBL/GenBank/DDBJ databases">
        <title>Complete sequence of Acidovorax avenae subsp. citrulli AAC00-1.</title>
        <authorList>
            <person name="Copeland A."/>
            <person name="Lucas S."/>
            <person name="Lapidus A."/>
            <person name="Barry K."/>
            <person name="Detter J.C."/>
            <person name="Glavina del Rio T."/>
            <person name="Dalin E."/>
            <person name="Tice H."/>
            <person name="Pitluck S."/>
            <person name="Kiss H."/>
            <person name="Brettin T."/>
            <person name="Bruce D."/>
            <person name="Han C."/>
            <person name="Tapia R."/>
            <person name="Gilna P."/>
            <person name="Schmutz J."/>
            <person name="Larimer F."/>
            <person name="Land M."/>
            <person name="Hauser L."/>
            <person name="Kyrpides N."/>
            <person name="Kim E."/>
            <person name="Stahl D."/>
            <person name="Richardson P."/>
        </authorList>
    </citation>
    <scope>NUCLEOTIDE SEQUENCE [LARGE SCALE GENOMIC DNA]</scope>
    <source>
        <strain>AAC00-1</strain>
    </source>
</reference>
<gene>
    <name type="ordered locus">Aave_3512</name>
</gene>
<name>Y3512_PARC0</name>
<feature type="chain" id="PRO_0000379805" description="Putative hydro-lyase Aave_3512">
    <location>
        <begin position="1"/>
        <end position="269"/>
    </location>
</feature>
<protein>
    <recommendedName>
        <fullName evidence="1">Putative hydro-lyase Aave_3512</fullName>
        <ecNumber evidence="1">4.2.1.-</ecNumber>
    </recommendedName>
</protein>
<sequence>MNSPLEAARAAAIHAARAARARYRAGVVEPTAGRAPGMTQANMIALPREWAWDFLLYAQRNPKPCPVLDVIEAGSHATVLAEGADLRTDIPLYRVWRDGRLAGEVSDATALWAGQPDLVTFLIGCSFTFETPLQEAGIEVRHIAQGCNVPMYRTQRMRRPAGRLRGELVVSMRPVPADRVADAVSISGRFPSVHGAPVHVGDPAALGIADLARPDFGDPVEIHPGEVPVFWACGVTPQAAVMASGVPFAVTHAPGHMFITDVPDSTYHV</sequence>
<accession>A1TSX9</accession>
<keyword id="KW-0456">Lyase</keyword>
<organism>
    <name type="scientific">Paracidovorax citrulli (strain AAC00-1)</name>
    <name type="common">Acidovorax citrulli</name>
    <dbReference type="NCBI Taxonomy" id="397945"/>
    <lineage>
        <taxon>Bacteria</taxon>
        <taxon>Pseudomonadati</taxon>
        <taxon>Pseudomonadota</taxon>
        <taxon>Betaproteobacteria</taxon>
        <taxon>Burkholderiales</taxon>
        <taxon>Comamonadaceae</taxon>
        <taxon>Paracidovorax</taxon>
    </lineage>
</organism>
<dbReference type="EC" id="4.2.1.-" evidence="1"/>
<dbReference type="EMBL" id="CP000512">
    <property type="protein sequence ID" value="ABM34067.1"/>
    <property type="molecule type" value="Genomic_DNA"/>
</dbReference>
<dbReference type="RefSeq" id="WP_011796564.1">
    <property type="nucleotide sequence ID" value="NC_008752.1"/>
</dbReference>
<dbReference type="SMR" id="A1TSX9"/>
<dbReference type="STRING" id="397945.Aave_3512"/>
<dbReference type="KEGG" id="aav:Aave_3512"/>
<dbReference type="eggNOG" id="COG4336">
    <property type="taxonomic scope" value="Bacteria"/>
</dbReference>
<dbReference type="HOGENOM" id="CLU_059759_0_0_4"/>
<dbReference type="OrthoDB" id="149585at2"/>
<dbReference type="Proteomes" id="UP000002596">
    <property type="component" value="Chromosome"/>
</dbReference>
<dbReference type="GO" id="GO:0016829">
    <property type="term" value="F:lyase activity"/>
    <property type="evidence" value="ECO:0007669"/>
    <property type="project" value="UniProtKB-KW"/>
</dbReference>
<dbReference type="FunFam" id="3.30.2040.10:FF:000001">
    <property type="entry name" value="D-glutamate cyclase, mitochondrial"/>
    <property type="match status" value="1"/>
</dbReference>
<dbReference type="Gene3D" id="3.40.1640.10">
    <property type="entry name" value="PSTPO5379-like"/>
    <property type="match status" value="1"/>
</dbReference>
<dbReference type="Gene3D" id="3.30.2040.10">
    <property type="entry name" value="PSTPO5379-like domain"/>
    <property type="match status" value="1"/>
</dbReference>
<dbReference type="HAMAP" id="MF_01830">
    <property type="entry name" value="Hydro_lyase"/>
    <property type="match status" value="1"/>
</dbReference>
<dbReference type="InterPro" id="IPR009906">
    <property type="entry name" value="D-Glu_cyclase"/>
</dbReference>
<dbReference type="InterPro" id="IPR038021">
    <property type="entry name" value="Putative_hydro-lyase"/>
</dbReference>
<dbReference type="InterPro" id="IPR016938">
    <property type="entry name" value="UPF0317"/>
</dbReference>
<dbReference type="NCBIfam" id="NF003969">
    <property type="entry name" value="PRK05463.1"/>
    <property type="match status" value="1"/>
</dbReference>
<dbReference type="PANTHER" id="PTHR32022">
    <property type="entry name" value="D-GLUTAMATE CYCLASE, MITOCHONDRIAL"/>
    <property type="match status" value="1"/>
</dbReference>
<dbReference type="PANTHER" id="PTHR32022:SF10">
    <property type="entry name" value="D-GLUTAMATE CYCLASE, MITOCHONDRIAL"/>
    <property type="match status" value="1"/>
</dbReference>
<dbReference type="Pfam" id="PF07286">
    <property type="entry name" value="D-Glu_cyclase"/>
    <property type="match status" value="1"/>
</dbReference>
<dbReference type="PIRSF" id="PIRSF029755">
    <property type="entry name" value="UCP029755"/>
    <property type="match status" value="1"/>
</dbReference>
<dbReference type="SUPFAM" id="SSF160920">
    <property type="entry name" value="PSTPO5379-like"/>
    <property type="match status" value="1"/>
</dbReference>
<comment type="similarity">
    <text evidence="1">Belongs to the D-glutamate cyclase family.</text>
</comment>
<evidence type="ECO:0000255" key="1">
    <source>
        <dbReference type="HAMAP-Rule" id="MF_01830"/>
    </source>
</evidence>
<proteinExistence type="inferred from homology"/>